<dbReference type="EMBL" id="BC122981">
    <property type="protein sequence ID" value="AAI22982.1"/>
    <property type="molecule type" value="mRNA"/>
</dbReference>
<dbReference type="RefSeq" id="NP_001072163.1">
    <property type="nucleotide sequence ID" value="NM_001078695.1"/>
</dbReference>
<dbReference type="SMR" id="Q0IHT3"/>
<dbReference type="FunCoup" id="Q0IHT3">
    <property type="interactions" value="3164"/>
</dbReference>
<dbReference type="STRING" id="8364.ENSXETP00000036460"/>
<dbReference type="PaxDb" id="8364-ENSXETP00000060646"/>
<dbReference type="DNASU" id="496857"/>
<dbReference type="GeneID" id="496857"/>
<dbReference type="KEGG" id="xtr:496857"/>
<dbReference type="AGR" id="Xenbase:XB-GENE-5787077"/>
<dbReference type="CTD" id="64784"/>
<dbReference type="Xenbase" id="XB-GENE-5787077">
    <property type="gene designation" value="crtc3"/>
</dbReference>
<dbReference type="eggNOG" id="ENOG502QV9G">
    <property type="taxonomic scope" value="Eukaryota"/>
</dbReference>
<dbReference type="HOGENOM" id="CLU_019357_2_0_1"/>
<dbReference type="InParanoid" id="Q0IHT3"/>
<dbReference type="OrthoDB" id="8947034at2759"/>
<dbReference type="Proteomes" id="UP000008143">
    <property type="component" value="Chromosome 3"/>
</dbReference>
<dbReference type="Bgee" id="ENSXETG00000001294">
    <property type="expression patterns" value="Expressed in gastrula and 16 other cell types or tissues"/>
</dbReference>
<dbReference type="GO" id="GO:0005737">
    <property type="term" value="C:cytoplasm"/>
    <property type="evidence" value="ECO:0007669"/>
    <property type="project" value="UniProtKB-SubCell"/>
</dbReference>
<dbReference type="GO" id="GO:0005634">
    <property type="term" value="C:nucleus"/>
    <property type="evidence" value="ECO:0007669"/>
    <property type="project" value="UniProtKB-SubCell"/>
</dbReference>
<dbReference type="GO" id="GO:0008140">
    <property type="term" value="F:cAMP response element binding protein binding"/>
    <property type="evidence" value="ECO:0007669"/>
    <property type="project" value="InterPro"/>
</dbReference>
<dbReference type="GO" id="GO:0051289">
    <property type="term" value="P:protein homotetramerization"/>
    <property type="evidence" value="ECO:0007669"/>
    <property type="project" value="InterPro"/>
</dbReference>
<dbReference type="InterPro" id="IPR024786">
    <property type="entry name" value="TORC"/>
</dbReference>
<dbReference type="InterPro" id="IPR024785">
    <property type="entry name" value="TORC_C"/>
</dbReference>
<dbReference type="InterPro" id="IPR024784">
    <property type="entry name" value="TORC_M"/>
</dbReference>
<dbReference type="InterPro" id="IPR024783">
    <property type="entry name" value="TORC_N"/>
</dbReference>
<dbReference type="PANTHER" id="PTHR13589">
    <property type="entry name" value="CREB-REGULATED TRANSCRIPTION COACTIVATOR"/>
    <property type="match status" value="1"/>
</dbReference>
<dbReference type="PANTHER" id="PTHR13589:SF4">
    <property type="entry name" value="CREB-REGULATED TRANSCRIPTION COACTIVATOR 3"/>
    <property type="match status" value="1"/>
</dbReference>
<dbReference type="Pfam" id="PF12886">
    <property type="entry name" value="TORC_C"/>
    <property type="match status" value="1"/>
</dbReference>
<dbReference type="Pfam" id="PF12885">
    <property type="entry name" value="TORC_M"/>
    <property type="match status" value="1"/>
</dbReference>
<dbReference type="Pfam" id="PF12884">
    <property type="entry name" value="TORC_N"/>
    <property type="match status" value="1"/>
</dbReference>
<name>CRTC3_XENTR</name>
<accession>Q0IHT3</accession>
<keyword id="KW-0010">Activator</keyword>
<keyword id="KW-0963">Cytoplasm</keyword>
<keyword id="KW-0539">Nucleus</keyword>
<keyword id="KW-0597">Phosphoprotein</keyword>
<keyword id="KW-1185">Reference proteome</keyword>
<keyword id="KW-0804">Transcription</keyword>
<keyword id="KW-0805">Transcription regulation</keyword>
<proteinExistence type="evidence at transcript level"/>
<feature type="chain" id="PRO_0000318534" description="CREB-regulated transcription coactivator 3">
    <location>
        <begin position="1"/>
        <end position="637"/>
    </location>
</feature>
<feature type="region of interest" description="Disordered" evidence="2">
    <location>
        <begin position="105"/>
        <end position="184"/>
    </location>
</feature>
<feature type="region of interest" description="Disordered" evidence="2">
    <location>
        <begin position="269"/>
        <end position="288"/>
    </location>
</feature>
<feature type="region of interest" description="Disordered" evidence="2">
    <location>
        <begin position="299"/>
        <end position="462"/>
    </location>
</feature>
<feature type="region of interest" description="Disordered" evidence="2">
    <location>
        <begin position="615"/>
        <end position="637"/>
    </location>
</feature>
<feature type="compositionally biased region" description="Basic residues" evidence="2">
    <location>
        <begin position="105"/>
        <end position="115"/>
    </location>
</feature>
<feature type="compositionally biased region" description="Polar residues" evidence="2">
    <location>
        <begin position="145"/>
        <end position="159"/>
    </location>
</feature>
<feature type="compositionally biased region" description="Polar residues" evidence="2">
    <location>
        <begin position="309"/>
        <end position="337"/>
    </location>
</feature>
<feature type="compositionally biased region" description="Low complexity" evidence="2">
    <location>
        <begin position="344"/>
        <end position="365"/>
    </location>
</feature>
<feature type="compositionally biased region" description="Polar residues" evidence="2">
    <location>
        <begin position="377"/>
        <end position="395"/>
    </location>
</feature>
<feature type="compositionally biased region" description="Low complexity" evidence="2">
    <location>
        <begin position="396"/>
        <end position="407"/>
    </location>
</feature>
<feature type="compositionally biased region" description="Pro residues" evidence="2">
    <location>
        <begin position="418"/>
        <end position="429"/>
    </location>
</feature>
<feature type="compositionally biased region" description="Low complexity" evidence="2">
    <location>
        <begin position="430"/>
        <end position="447"/>
    </location>
</feature>
<feature type="modified residue" description="Phosphoserine" evidence="1">
    <location>
        <position position="66"/>
    </location>
</feature>
<feature type="modified residue" description="Phosphoserine" evidence="1">
    <location>
        <position position="133"/>
    </location>
</feature>
<feature type="modified residue" description="Phosphothreonine" evidence="1">
    <location>
        <position position="143"/>
    </location>
</feature>
<feature type="modified residue" description="Phosphoserine; by SIK2" evidence="1">
    <location>
        <position position="145"/>
    </location>
</feature>
<feature type="modified residue" description="Phosphothreonine" evidence="1">
    <location>
        <position position="151"/>
    </location>
</feature>
<feature type="modified residue" description="Phosphoserine" evidence="3">
    <location>
        <position position="293"/>
    </location>
</feature>
<feature type="modified residue" description="Phosphoserine" evidence="1">
    <location>
        <position position="377"/>
    </location>
</feature>
<feature type="modified residue" description="Phosphoserine" evidence="1">
    <location>
        <position position="396"/>
    </location>
</feature>
<feature type="modified residue" description="Phosphoserine" evidence="3">
    <location>
        <position position="561"/>
    </location>
</feature>
<comment type="function">
    <text evidence="1">Transcriptional coactivator for creb1 which activates transcription through both consensus and variant cAMP response element (CRE) sites. Acts as a coactivator, in the SIK/TORC signaling pathway, being active when dephosphorylated and acts independently of creb1 'Ser-119' phosphorylation. Enhances the interaction of creb1 with taf4. Regulates the expression of specific CREB-activated genes such as the steroidogenic gene, StAR. Potent coactivator of ppargc1a and inducer of mitochondrial biogenesis in muscle cells (By similarity).</text>
</comment>
<comment type="subunit">
    <text evidence="1">Binding, as a tetramer, through its N-terminal region, with the bZIP domain of creb1 enhances recruitment of taf4 to the promoter. 'Arg-300' in the bZIP domain of creb1 is essential for this interaction (By similarity).</text>
</comment>
<comment type="subcellular location">
    <subcellularLocation>
        <location evidence="1">Nucleus</location>
    </subcellularLocation>
    <subcellularLocation>
        <location evidence="1">Cytoplasm</location>
    </subcellularLocation>
    <text evidence="1">Appears to be mainly nuclear.</text>
</comment>
<comment type="similarity">
    <text evidence="3">Belongs to the TORC family.</text>
</comment>
<evidence type="ECO:0000250" key="1"/>
<evidence type="ECO:0000256" key="2">
    <source>
        <dbReference type="SAM" id="MobiDB-lite"/>
    </source>
</evidence>
<evidence type="ECO:0000305" key="3"/>
<reference key="1">
    <citation type="submission" date="2006-09" db="EMBL/GenBank/DDBJ databases">
        <authorList>
            <consortium name="NIH - Xenopus Gene Collection (XGC) project"/>
        </authorList>
    </citation>
    <scope>NUCLEOTIDE SEQUENCE [LARGE SCALE MRNA]</scope>
    <source>
        <tissue>Testis</tissue>
    </source>
</reference>
<organism>
    <name type="scientific">Xenopus tropicalis</name>
    <name type="common">Western clawed frog</name>
    <name type="synonym">Silurana tropicalis</name>
    <dbReference type="NCBI Taxonomy" id="8364"/>
    <lineage>
        <taxon>Eukaryota</taxon>
        <taxon>Metazoa</taxon>
        <taxon>Chordata</taxon>
        <taxon>Craniata</taxon>
        <taxon>Vertebrata</taxon>
        <taxon>Euteleostomi</taxon>
        <taxon>Amphibia</taxon>
        <taxon>Batrachia</taxon>
        <taxon>Anura</taxon>
        <taxon>Pipoidea</taxon>
        <taxon>Pipidae</taxon>
        <taxon>Xenopodinae</taxon>
        <taxon>Xenopus</taxon>
        <taxon>Silurana</taxon>
    </lineage>
</organism>
<sequence>MAATPAASGSNPRKFSEKIALHNQKQAEETRAFDELMSDLTVSRVQFQKLQQLRLAQSRAQYYGGSLPNVNQISSSPTDFQPSFHPTDNIRGMRHHGLVERVSRNRLHSSHHRPIEKHGRQCDSSPYGSVYLSPPPDNNWRRTNSDSALHTSASSTKSQDPFMGGAQAMLRAPKPPQRNTSLQDGEIDNFGEVFSFPNAMTEENMLNVTKPLPKQIWEAQKVQCITSRPRSCEVPNIKVFPSSDSNASLSHFQGSLNTGGSLPDLTNLHFPSPLPTPLDPDDTAYANISAENSSGLPAAMTHLGISGSPGMQNTRSNPSIQATMNNNSLASNVNSHTPPGRNNPALHPSLRLSSLSNPSLPTSALGTSPRRRHTPVSPLTLTPGSESNRSISNQFSPTSPMNMPPNSQGVSMDRSPLSLPPLEPPPPYPLYSDQPQPHLHHTQQQMHESLDSQNYQPPSPVPCPPLDLNLANSSLSGFFGDSFFDQQQPTKQGKYLWQQQEQYDMFGSPSSSLPNTNAFFDPNMNLQYSQASLMGLGGSHGSLQDSFHLRPNYLYSNCGGSVPNIILTDDSSNSLSKDISNAVAGVSELGFDADNTFQLDDELKLGPLSLDGLSMLSDPDMVLPDPSIEDSFRSDKL</sequence>
<gene>
    <name type="primary">crtc3</name>
    <name type="synonym">torc3</name>
</gene>
<protein>
    <recommendedName>
        <fullName>CREB-regulated transcription coactivator 3</fullName>
    </recommendedName>
    <alternativeName>
        <fullName>Transducer of regulated cAMP response element-binding protein 3</fullName>
        <shortName>TORC-3</shortName>
        <shortName>Transducer of CREB protein 3</shortName>
    </alternativeName>
</protein>